<sequence length="67" mass="7828">MMFRLTSVSCFLLVIACLNLFQVVLTRRCFPPGVYCTRHLPCCRGRCCSGWCRPRCFPRYGKRATFQ</sequence>
<organism>
    <name type="scientific">Conus capitaneus</name>
    <name type="common">Captain cone</name>
    <dbReference type="NCBI Taxonomy" id="89439"/>
    <lineage>
        <taxon>Eukaryota</taxon>
        <taxon>Metazoa</taxon>
        <taxon>Spiralia</taxon>
        <taxon>Lophotrochozoa</taxon>
        <taxon>Mollusca</taxon>
        <taxon>Gastropoda</taxon>
        <taxon>Caenogastropoda</taxon>
        <taxon>Neogastropoda</taxon>
        <taxon>Conoidea</taxon>
        <taxon>Conidae</taxon>
        <taxon>Conus</taxon>
        <taxon>Rhizoconus</taxon>
    </lineage>
</organism>
<accession>P69494</accession>
<accession>Q59AA6</accession>
<evidence type="ECO:0000250" key="1"/>
<evidence type="ECO:0000250" key="2">
    <source>
        <dbReference type="UniProtKB" id="Q7Z094"/>
    </source>
</evidence>
<evidence type="ECO:0000255" key="3"/>
<evidence type="ECO:0000305" key="4"/>
<feature type="signal peptide" evidence="3">
    <location>
        <begin position="1"/>
        <end position="26"/>
    </location>
</feature>
<feature type="chain" id="PRO_0000035088" description="Conotoxin Cp1.1">
    <location>
        <begin position="27"/>
        <end position="60"/>
    </location>
</feature>
<feature type="propeptide" id="PRO_0000035089" evidence="1">
    <location>
        <begin position="64"/>
        <end position="67"/>
    </location>
</feature>
<feature type="modified residue" description="Tyrosine amide" evidence="1">
    <location>
        <position position="60"/>
    </location>
</feature>
<feature type="disulfide bond" evidence="2">
    <location>
        <begin position="29"/>
        <end position="43"/>
    </location>
</feature>
<feature type="disulfide bond" evidence="2">
    <location>
        <begin position="36"/>
        <end position="48"/>
    </location>
</feature>
<feature type="disulfide bond" evidence="2">
    <location>
        <begin position="42"/>
        <end position="52"/>
    </location>
</feature>
<feature type="disulfide bond" evidence="2">
    <location>
        <begin position="47"/>
        <end position="56"/>
    </location>
</feature>
<comment type="subcellular location">
    <subcellularLocation>
        <location evidence="1">Secreted</location>
    </subcellularLocation>
</comment>
<comment type="tissue specificity">
    <text>Expressed by the venom duct.</text>
</comment>
<comment type="domain">
    <text>The cysteine framework is XI (C-C-CC-CC-C-C).</text>
</comment>
<comment type="similarity">
    <text evidence="4">Belongs to the conotoxin I2 superfamily.</text>
</comment>
<reference key="1">
    <citation type="journal article" date="2004" name="Toxicon">
        <title>Novel conopeptides of the I-superfamily occur in several clades of cone snails.</title>
        <authorList>
            <person name="Kauferstein S."/>
            <person name="Huys I."/>
            <person name="Kuch U."/>
            <person name="Melaun C."/>
            <person name="Tytgat J."/>
            <person name="Mebs D."/>
        </authorList>
    </citation>
    <scope>NUCLEOTIDE SEQUENCE [MRNA]</scope>
    <source>
        <tissue>Venom duct</tissue>
    </source>
</reference>
<keyword id="KW-0027">Amidation</keyword>
<keyword id="KW-0165">Cleavage on pair of basic residues</keyword>
<keyword id="KW-1015">Disulfide bond</keyword>
<keyword id="KW-0964">Secreted</keyword>
<keyword id="KW-0732">Signal</keyword>
<keyword id="KW-0800">Toxin</keyword>
<protein>
    <recommendedName>
        <fullName>Conotoxin Cp1.1</fullName>
    </recommendedName>
</protein>
<dbReference type="EMBL" id="AJ746187">
    <property type="protein sequence ID" value="CAG34095.1"/>
    <property type="molecule type" value="mRNA"/>
</dbReference>
<dbReference type="SMR" id="P69494"/>
<dbReference type="ConoServer" id="1392">
    <property type="toxin name" value="Cp1.1 precursor"/>
</dbReference>
<dbReference type="GO" id="GO:0005576">
    <property type="term" value="C:extracellular region"/>
    <property type="evidence" value="ECO:0007669"/>
    <property type="project" value="UniProtKB-SubCell"/>
</dbReference>
<dbReference type="GO" id="GO:0090729">
    <property type="term" value="F:toxin activity"/>
    <property type="evidence" value="ECO:0007669"/>
    <property type="project" value="UniProtKB-KW"/>
</dbReference>
<dbReference type="InterPro" id="IPR013141">
    <property type="entry name" value="Conotoxin-I_CS"/>
</dbReference>
<dbReference type="InterPro" id="IPR020242">
    <property type="entry name" value="Conotoxin_I2"/>
</dbReference>
<dbReference type="Pfam" id="PF17557">
    <property type="entry name" value="Conotoxin_I2"/>
    <property type="match status" value="1"/>
</dbReference>
<dbReference type="PROSITE" id="PS60019">
    <property type="entry name" value="I_CONOTOXIN"/>
    <property type="match status" value="1"/>
</dbReference>
<proteinExistence type="evidence at transcript level"/>
<name>I2_CONCE</name>